<protein>
    <recommendedName>
        <fullName evidence="1">Heptaprenylglyceryl phosphate synthase</fullName>
        <shortName evidence="1">HepGP synthase</shortName>
        <ecNumber evidence="1">2.5.1.n9</ecNumber>
    </recommendedName>
    <alternativeName>
        <fullName evidence="1">Glycerol-1-phosphate heptaprenyltransferase</fullName>
    </alternativeName>
</protein>
<dbReference type="EC" id="2.5.1.n9" evidence="1"/>
<dbReference type="EMBL" id="AJ938182">
    <property type="protein sequence ID" value="CAI81530.1"/>
    <property type="molecule type" value="Genomic_DNA"/>
</dbReference>
<dbReference type="RefSeq" id="WP_000272072.1">
    <property type="nucleotide sequence ID" value="NC_007622.1"/>
</dbReference>
<dbReference type="SMR" id="Q2YU68"/>
<dbReference type="KEGG" id="sab:SAB1841c"/>
<dbReference type="HOGENOM" id="CLU_095211_0_0_9"/>
<dbReference type="UniPathway" id="UPA00940"/>
<dbReference type="GO" id="GO:0120536">
    <property type="term" value="F:heptaprenylglyceryl phosphate synthase activity"/>
    <property type="evidence" value="ECO:0007669"/>
    <property type="project" value="RHEA"/>
</dbReference>
<dbReference type="GO" id="GO:0000287">
    <property type="term" value="F:magnesium ion binding"/>
    <property type="evidence" value="ECO:0007669"/>
    <property type="project" value="UniProtKB-UniRule"/>
</dbReference>
<dbReference type="GO" id="GO:0046474">
    <property type="term" value="P:glycerophospholipid biosynthetic process"/>
    <property type="evidence" value="ECO:0007669"/>
    <property type="project" value="UniProtKB-UniRule"/>
</dbReference>
<dbReference type="CDD" id="cd02812">
    <property type="entry name" value="PcrB_like"/>
    <property type="match status" value="1"/>
</dbReference>
<dbReference type="FunFam" id="3.20.20.390:FF:000001">
    <property type="entry name" value="Heptaprenylglyceryl phosphate synthase"/>
    <property type="match status" value="1"/>
</dbReference>
<dbReference type="Gene3D" id="3.20.20.390">
    <property type="entry name" value="FMN-linked oxidoreductases"/>
    <property type="match status" value="1"/>
</dbReference>
<dbReference type="HAMAP" id="MF_00112">
    <property type="entry name" value="GGGP_HepGP_synthase"/>
    <property type="match status" value="1"/>
</dbReference>
<dbReference type="InterPro" id="IPR039074">
    <property type="entry name" value="GGGP/HepGP_synthase_I"/>
</dbReference>
<dbReference type="InterPro" id="IPR038597">
    <property type="entry name" value="GGGP/HepGP_synthase_sf"/>
</dbReference>
<dbReference type="InterPro" id="IPR008205">
    <property type="entry name" value="GGGP_HepGP_synthase"/>
</dbReference>
<dbReference type="NCBIfam" id="TIGR01768">
    <property type="entry name" value="GGGP-family"/>
    <property type="match status" value="1"/>
</dbReference>
<dbReference type="NCBIfam" id="NF003197">
    <property type="entry name" value="PRK04169.1-1"/>
    <property type="match status" value="1"/>
</dbReference>
<dbReference type="NCBIfam" id="NF003199">
    <property type="entry name" value="PRK04169.1-3"/>
    <property type="match status" value="1"/>
</dbReference>
<dbReference type="NCBIfam" id="NF003200">
    <property type="entry name" value="PRK04169.1-4"/>
    <property type="match status" value="1"/>
</dbReference>
<dbReference type="PANTHER" id="PTHR40029">
    <property type="match status" value="1"/>
</dbReference>
<dbReference type="PANTHER" id="PTHR40029:SF2">
    <property type="entry name" value="HEPTAPRENYLGLYCERYL PHOSPHATE SYNTHASE"/>
    <property type="match status" value="1"/>
</dbReference>
<dbReference type="Pfam" id="PF01884">
    <property type="entry name" value="PcrB"/>
    <property type="match status" value="1"/>
</dbReference>
<dbReference type="SUPFAM" id="SSF51395">
    <property type="entry name" value="FMN-linked oxidoreductases"/>
    <property type="match status" value="1"/>
</dbReference>
<accession>Q2YU68</accession>
<gene>
    <name evidence="1" type="primary">pcrB</name>
    <name type="ordered locus">SAB1841c</name>
</gene>
<proteinExistence type="inferred from homology"/>
<feature type="chain" id="PRO_0000231306" description="Heptaprenylglyceryl phosphate synthase">
    <location>
        <begin position="1"/>
        <end position="230"/>
    </location>
</feature>
<feature type="binding site" evidence="1">
    <location>
        <position position="12"/>
    </location>
    <ligand>
        <name>sn-glycerol 1-phosphate</name>
        <dbReference type="ChEBI" id="CHEBI:57685"/>
    </ligand>
</feature>
<feature type="binding site" evidence="1">
    <location>
        <position position="14"/>
    </location>
    <ligand>
        <name>Mg(2+)</name>
        <dbReference type="ChEBI" id="CHEBI:18420"/>
    </ligand>
</feature>
<feature type="binding site" evidence="1">
    <location>
        <position position="40"/>
    </location>
    <ligand>
        <name>Mg(2+)</name>
        <dbReference type="ChEBI" id="CHEBI:18420"/>
    </ligand>
</feature>
<feature type="binding site" evidence="1">
    <location>
        <begin position="159"/>
        <end position="164"/>
    </location>
    <ligand>
        <name>sn-glycerol 1-phosphate</name>
        <dbReference type="ChEBI" id="CHEBI:57685"/>
    </ligand>
</feature>
<feature type="binding site" evidence="1">
    <location>
        <position position="189"/>
    </location>
    <ligand>
        <name>sn-glycerol 1-phosphate</name>
        <dbReference type="ChEBI" id="CHEBI:57685"/>
    </ligand>
</feature>
<feature type="binding site" evidence="1">
    <location>
        <begin position="209"/>
        <end position="210"/>
    </location>
    <ligand>
        <name>sn-glycerol 1-phosphate</name>
        <dbReference type="ChEBI" id="CHEBI:57685"/>
    </ligand>
</feature>
<reference key="1">
    <citation type="journal article" date="2007" name="PLoS ONE">
        <title>Molecular correlates of host specialization in Staphylococcus aureus.</title>
        <authorList>
            <person name="Herron-Olson L."/>
            <person name="Fitzgerald J.R."/>
            <person name="Musser J.M."/>
            <person name="Kapur V."/>
        </authorList>
    </citation>
    <scope>NUCLEOTIDE SEQUENCE [LARGE SCALE GENOMIC DNA]</scope>
    <source>
        <strain>bovine RF122 / ET3-1</strain>
    </source>
</reference>
<organism>
    <name type="scientific">Staphylococcus aureus (strain bovine RF122 / ET3-1)</name>
    <dbReference type="NCBI Taxonomy" id="273036"/>
    <lineage>
        <taxon>Bacteria</taxon>
        <taxon>Bacillati</taxon>
        <taxon>Bacillota</taxon>
        <taxon>Bacilli</taxon>
        <taxon>Bacillales</taxon>
        <taxon>Staphylococcaceae</taxon>
        <taxon>Staphylococcus</taxon>
    </lineage>
</organism>
<sequence>MYDIKKWRHIFKLDSAKHISDDDLDAICMSQTDAIMIGGTDDVTEDNVIHLMSRVRRYPLPLVLEISNIESVMPGFDFYFVPTVLNSTDVAFHNGTLLEALKTYGHSIDFEEVIFEGYVVCNADSKVAKHTKANTDLTTEDLEAYAQMVNHMYRLPVMYIEYSGIYGDVSKVQAVSEHLTETQLFYGGGISSEQQATEMAAIADTIIVGDIIYKDIKKALKTVKIKESSK</sequence>
<comment type="function">
    <text evidence="1">Prenyltransferase that catalyzes in vivo the transfer of the heptaprenyl moiety of heptaprenyl pyrophosphate (HepPP; 35 carbon atoms) to the C3 hydroxyl of sn-glycerol-1-phosphate (G1P), producing heptaprenylglyceryl phosphate (HepGP). This reaction is an ether-bond-formation step in the biosynthesis of archaea-type G1P-based membrane lipids found in Bacillales.</text>
</comment>
<comment type="catalytic activity">
    <reaction evidence="1">
        <text>sn-glycerol 1-phosphate + all-trans-heptaprenyl diphosphate = 3-heptaprenyl-sn-glycero-1-phosphate + diphosphate</text>
        <dbReference type="Rhea" id="RHEA:33495"/>
        <dbReference type="ChEBI" id="CHEBI:33019"/>
        <dbReference type="ChEBI" id="CHEBI:57685"/>
        <dbReference type="ChEBI" id="CHEBI:58206"/>
        <dbReference type="ChEBI" id="CHEBI:64781"/>
        <dbReference type="EC" id="2.5.1.n9"/>
    </reaction>
</comment>
<comment type="cofactor">
    <cofactor evidence="1">
        <name>Mg(2+)</name>
        <dbReference type="ChEBI" id="CHEBI:18420"/>
    </cofactor>
</comment>
<comment type="pathway">
    <text evidence="1">Membrane lipid metabolism; glycerophospholipid metabolism.</text>
</comment>
<comment type="subunit">
    <text evidence="1">Homodimer.</text>
</comment>
<comment type="similarity">
    <text evidence="1">Belongs to the GGGP/HepGP synthase family. Group I subfamily.</text>
</comment>
<name>PCRB_STAAB</name>
<keyword id="KW-0444">Lipid biosynthesis</keyword>
<keyword id="KW-0443">Lipid metabolism</keyword>
<keyword id="KW-0460">Magnesium</keyword>
<keyword id="KW-0479">Metal-binding</keyword>
<keyword id="KW-0594">Phospholipid biosynthesis</keyword>
<keyword id="KW-1208">Phospholipid metabolism</keyword>
<keyword id="KW-0808">Transferase</keyword>
<evidence type="ECO:0000255" key="1">
    <source>
        <dbReference type="HAMAP-Rule" id="MF_00112"/>
    </source>
</evidence>